<name>KLH11_MOUSE</name>
<comment type="function">
    <text evidence="1">Component of a cullin-RING-based BCR (BTB-CUL3-RBX1) E3 ubiquitin-protein ligase complex that mediates the ubiquitination of target proteins, leading most often to their proteasomal degradation.</text>
</comment>
<comment type="subunit">
    <text evidence="1">Homodimer. Interacts with CUL3. Component of a cullin-RING-based BCR (BTB-CUL3-RBX1) E3 ubiquitin-protein ligase complex (By similarity).</text>
</comment>
<comment type="alternative products">
    <event type="alternative splicing"/>
    <isoform>
        <id>Q8CE33-1</id>
        <name>1</name>
        <sequence type="displayed"/>
    </isoform>
    <isoform>
        <id>Q8CE33-2</id>
        <name>2</name>
        <sequence type="described" ref="VSP_019496"/>
    </isoform>
</comment>
<comment type="sequence caution" evidence="6">
    <conflict type="frameshift">
        <sequence resource="EMBL-CDS" id="BAE41452"/>
    </conflict>
</comment>
<evidence type="ECO:0000250" key="1"/>
<evidence type="ECO:0000250" key="2">
    <source>
        <dbReference type="UniProtKB" id="Q9NVR0"/>
    </source>
</evidence>
<evidence type="ECO:0000255" key="3"/>
<evidence type="ECO:0000255" key="4">
    <source>
        <dbReference type="PROSITE-ProRule" id="PRU00037"/>
    </source>
</evidence>
<evidence type="ECO:0000303" key="5">
    <source>
    </source>
</evidence>
<evidence type="ECO:0000305" key="6"/>
<reference key="1">
    <citation type="journal article" date="2005" name="Science">
        <title>The transcriptional landscape of the mammalian genome.</title>
        <authorList>
            <person name="Carninci P."/>
            <person name="Kasukawa T."/>
            <person name="Katayama S."/>
            <person name="Gough J."/>
            <person name="Frith M.C."/>
            <person name="Maeda N."/>
            <person name="Oyama R."/>
            <person name="Ravasi T."/>
            <person name="Lenhard B."/>
            <person name="Wells C."/>
            <person name="Kodzius R."/>
            <person name="Shimokawa K."/>
            <person name="Bajic V.B."/>
            <person name="Brenner S.E."/>
            <person name="Batalov S."/>
            <person name="Forrest A.R."/>
            <person name="Zavolan M."/>
            <person name="Davis M.J."/>
            <person name="Wilming L.G."/>
            <person name="Aidinis V."/>
            <person name="Allen J.E."/>
            <person name="Ambesi-Impiombato A."/>
            <person name="Apweiler R."/>
            <person name="Aturaliya R.N."/>
            <person name="Bailey T.L."/>
            <person name="Bansal M."/>
            <person name="Baxter L."/>
            <person name="Beisel K.W."/>
            <person name="Bersano T."/>
            <person name="Bono H."/>
            <person name="Chalk A.M."/>
            <person name="Chiu K.P."/>
            <person name="Choudhary V."/>
            <person name="Christoffels A."/>
            <person name="Clutterbuck D.R."/>
            <person name="Crowe M.L."/>
            <person name="Dalla E."/>
            <person name="Dalrymple B.P."/>
            <person name="de Bono B."/>
            <person name="Della Gatta G."/>
            <person name="di Bernardo D."/>
            <person name="Down T."/>
            <person name="Engstrom P."/>
            <person name="Fagiolini M."/>
            <person name="Faulkner G."/>
            <person name="Fletcher C.F."/>
            <person name="Fukushima T."/>
            <person name="Furuno M."/>
            <person name="Futaki S."/>
            <person name="Gariboldi M."/>
            <person name="Georgii-Hemming P."/>
            <person name="Gingeras T.R."/>
            <person name="Gojobori T."/>
            <person name="Green R.E."/>
            <person name="Gustincich S."/>
            <person name="Harbers M."/>
            <person name="Hayashi Y."/>
            <person name="Hensch T.K."/>
            <person name="Hirokawa N."/>
            <person name="Hill D."/>
            <person name="Huminiecki L."/>
            <person name="Iacono M."/>
            <person name="Ikeo K."/>
            <person name="Iwama A."/>
            <person name="Ishikawa T."/>
            <person name="Jakt M."/>
            <person name="Kanapin A."/>
            <person name="Katoh M."/>
            <person name="Kawasawa Y."/>
            <person name="Kelso J."/>
            <person name="Kitamura H."/>
            <person name="Kitano H."/>
            <person name="Kollias G."/>
            <person name="Krishnan S.P."/>
            <person name="Kruger A."/>
            <person name="Kummerfeld S.K."/>
            <person name="Kurochkin I.V."/>
            <person name="Lareau L.F."/>
            <person name="Lazarevic D."/>
            <person name="Lipovich L."/>
            <person name="Liu J."/>
            <person name="Liuni S."/>
            <person name="McWilliam S."/>
            <person name="Madan Babu M."/>
            <person name="Madera M."/>
            <person name="Marchionni L."/>
            <person name="Matsuda H."/>
            <person name="Matsuzawa S."/>
            <person name="Miki H."/>
            <person name="Mignone F."/>
            <person name="Miyake S."/>
            <person name="Morris K."/>
            <person name="Mottagui-Tabar S."/>
            <person name="Mulder N."/>
            <person name="Nakano N."/>
            <person name="Nakauchi H."/>
            <person name="Ng P."/>
            <person name="Nilsson R."/>
            <person name="Nishiguchi S."/>
            <person name="Nishikawa S."/>
            <person name="Nori F."/>
            <person name="Ohara O."/>
            <person name="Okazaki Y."/>
            <person name="Orlando V."/>
            <person name="Pang K.C."/>
            <person name="Pavan W.J."/>
            <person name="Pavesi G."/>
            <person name="Pesole G."/>
            <person name="Petrovsky N."/>
            <person name="Piazza S."/>
            <person name="Reed J."/>
            <person name="Reid J.F."/>
            <person name="Ring B.Z."/>
            <person name="Ringwald M."/>
            <person name="Rost B."/>
            <person name="Ruan Y."/>
            <person name="Salzberg S.L."/>
            <person name="Sandelin A."/>
            <person name="Schneider C."/>
            <person name="Schoenbach C."/>
            <person name="Sekiguchi K."/>
            <person name="Semple C.A."/>
            <person name="Seno S."/>
            <person name="Sessa L."/>
            <person name="Sheng Y."/>
            <person name="Shibata Y."/>
            <person name="Shimada H."/>
            <person name="Shimada K."/>
            <person name="Silva D."/>
            <person name="Sinclair B."/>
            <person name="Sperling S."/>
            <person name="Stupka E."/>
            <person name="Sugiura K."/>
            <person name="Sultana R."/>
            <person name="Takenaka Y."/>
            <person name="Taki K."/>
            <person name="Tammoja K."/>
            <person name="Tan S.L."/>
            <person name="Tang S."/>
            <person name="Taylor M.S."/>
            <person name="Tegner J."/>
            <person name="Teichmann S.A."/>
            <person name="Ueda H.R."/>
            <person name="van Nimwegen E."/>
            <person name="Verardo R."/>
            <person name="Wei C.L."/>
            <person name="Yagi K."/>
            <person name="Yamanishi H."/>
            <person name="Zabarovsky E."/>
            <person name="Zhu S."/>
            <person name="Zimmer A."/>
            <person name="Hide W."/>
            <person name="Bult C."/>
            <person name="Grimmond S.M."/>
            <person name="Teasdale R.D."/>
            <person name="Liu E.T."/>
            <person name="Brusic V."/>
            <person name="Quackenbush J."/>
            <person name="Wahlestedt C."/>
            <person name="Mattick J.S."/>
            <person name="Hume D.A."/>
            <person name="Kai C."/>
            <person name="Sasaki D."/>
            <person name="Tomaru Y."/>
            <person name="Fukuda S."/>
            <person name="Kanamori-Katayama M."/>
            <person name="Suzuki M."/>
            <person name="Aoki J."/>
            <person name="Arakawa T."/>
            <person name="Iida J."/>
            <person name="Imamura K."/>
            <person name="Itoh M."/>
            <person name="Kato T."/>
            <person name="Kawaji H."/>
            <person name="Kawagashira N."/>
            <person name="Kawashima T."/>
            <person name="Kojima M."/>
            <person name="Kondo S."/>
            <person name="Konno H."/>
            <person name="Nakano K."/>
            <person name="Ninomiya N."/>
            <person name="Nishio T."/>
            <person name="Okada M."/>
            <person name="Plessy C."/>
            <person name="Shibata K."/>
            <person name="Shiraki T."/>
            <person name="Suzuki S."/>
            <person name="Tagami M."/>
            <person name="Waki K."/>
            <person name="Watahiki A."/>
            <person name="Okamura-Oho Y."/>
            <person name="Suzuki H."/>
            <person name="Kawai J."/>
            <person name="Hayashizaki Y."/>
        </authorList>
    </citation>
    <scope>NUCLEOTIDE SEQUENCE [LARGE SCALE MRNA] (ISOFORMS 1 AND 2)</scope>
    <source>
        <strain>C57BL/6J</strain>
        <tissue>Skin</tissue>
    </source>
</reference>
<reference key="2">
    <citation type="journal article" date="2004" name="Genome Res.">
        <title>The status, quality, and expansion of the NIH full-length cDNA project: the Mammalian Gene Collection (MGC).</title>
        <authorList>
            <consortium name="The MGC Project Team"/>
        </authorList>
    </citation>
    <scope>NUCLEOTIDE SEQUENCE [LARGE SCALE MRNA] OF 342-709 (ISOFORMS 1/2)</scope>
    <source>
        <strain>FVB/N</strain>
        <tissue>Mammary tumor</tissue>
    </source>
</reference>
<reference key="3">
    <citation type="journal article" date="2010" name="Cell">
        <title>A tissue-specific atlas of mouse protein phosphorylation and expression.</title>
        <authorList>
            <person name="Huttlin E.L."/>
            <person name="Jedrychowski M.P."/>
            <person name="Elias J.E."/>
            <person name="Goswami T."/>
            <person name="Rad R."/>
            <person name="Beausoleil S.A."/>
            <person name="Villen J."/>
            <person name="Haas W."/>
            <person name="Sowa M.E."/>
            <person name="Gygi S.P."/>
        </authorList>
    </citation>
    <scope>IDENTIFICATION BY MASS SPECTROMETRY [LARGE SCALE ANALYSIS]</scope>
    <source>
        <tissue>Brain</tissue>
        <tissue>Testis</tissue>
    </source>
</reference>
<sequence length="709" mass="80429">MAAAVAAAAAAAAAAASFQVLEMESMETAVAGSASLAAEVRGSGTVDFVTGAGISTLVDTGGSDPGPEAEDFECSTHCSELSWRQNEQRRQGLFCDITLCFGGAGGREFRAHRSVLAAATEYFTPLLSGQFSESRSGRVEMRKWSSEPGPEPDTVEAVIEYMYTGRIRVSTGSVHEVLELADRFLLIRLKEFCGEFLKKKLHLSNCVAIHSLAHMYTLSQLALKAADMIRRNFYKVIQDEEFYTLPFHLIRDWLSDLEITVDSEEVLFETVLKWVQRNAEERERYFEELFKLLRLSQMKPTYLTRHVKPERLVANNEVCVKLVAEAVERHALRAENIQSGTLQQPTSQVSLLPRYGQNMDVIMVIGGVSEGGDYLSECVGYFVDEDRWVNLPHIHNHLDGHAVAITESYVYVAGSMEPGFAKTVERYNPNLNTWEHVCSLMTRKHSFGLTEVKGKLYSIGGHGNFSPGFKDVTVYNPELDKWHNLESAPKILRDVKALAIEDRFVYIAARTPVDRDTEDGLKAVITCYDTETRQWQDVESLPLIDNYCFFQMSVVNSNFYQTASCCPKSYSLENEEAVRKIAGQVSDEILESLPPEVLSIEGAAICYYRDDVFIIGGWKNSDDIDKQYRKEAYRYCAERKRWMLLPPMPQPRCRATACHVRIPYRYLHGTQRYPMPQNLMWQKDRIRQMQEIHRHALNMRRVPSSQIEC</sequence>
<proteinExistence type="evidence at protein level"/>
<keyword id="KW-0025">Alternative splicing</keyword>
<keyword id="KW-0880">Kelch repeat</keyword>
<keyword id="KW-0597">Phosphoprotein</keyword>
<keyword id="KW-1185">Reference proteome</keyword>
<keyword id="KW-0677">Repeat</keyword>
<keyword id="KW-0732">Signal</keyword>
<keyword id="KW-0833">Ubl conjugation pathway</keyword>
<accession>Q8CE33</accession>
<accession>Q3TDZ6</accession>
<accession>Q91VP6</accession>
<feature type="signal peptide" evidence="3">
    <location>
        <begin position="1"/>
        <end position="15"/>
    </location>
</feature>
<feature type="chain" id="PRO_0000243919" description="Kelch-like protein 11">
    <location>
        <begin position="16"/>
        <end position="709"/>
    </location>
</feature>
<feature type="domain" description="BTB" evidence="4">
    <location>
        <begin position="95"/>
        <end position="171"/>
    </location>
</feature>
<feature type="domain" description="BACK">
    <location>
        <begin position="206"/>
        <end position="308"/>
    </location>
</feature>
<feature type="repeat" description="Kelch 1">
    <location>
        <begin position="361"/>
        <end position="408"/>
    </location>
</feature>
<feature type="repeat" description="Kelch 2">
    <location>
        <begin position="409"/>
        <end position="454"/>
    </location>
</feature>
<feature type="repeat" description="Kelch 3">
    <location>
        <begin position="456"/>
        <end position="502"/>
    </location>
</feature>
<feature type="repeat" description="Kelch 4">
    <location>
        <begin position="504"/>
        <end position="557"/>
    </location>
</feature>
<feature type="repeat" description="Kelch 5">
    <location>
        <begin position="611"/>
        <end position="662"/>
    </location>
</feature>
<feature type="modified residue" description="Phosphoserine" evidence="2">
    <location>
        <position position="466"/>
    </location>
</feature>
<feature type="splice variant" id="VSP_019496" description="In isoform 2." evidence="5">
    <location>
        <begin position="1"/>
        <end position="140"/>
    </location>
</feature>
<protein>
    <recommendedName>
        <fullName>Kelch-like protein 11</fullName>
    </recommendedName>
</protein>
<gene>
    <name type="primary">Klhl11</name>
</gene>
<organism>
    <name type="scientific">Mus musculus</name>
    <name type="common">Mouse</name>
    <dbReference type="NCBI Taxonomy" id="10090"/>
    <lineage>
        <taxon>Eukaryota</taxon>
        <taxon>Metazoa</taxon>
        <taxon>Chordata</taxon>
        <taxon>Craniata</taxon>
        <taxon>Vertebrata</taxon>
        <taxon>Euteleostomi</taxon>
        <taxon>Mammalia</taxon>
        <taxon>Eutheria</taxon>
        <taxon>Euarchontoglires</taxon>
        <taxon>Glires</taxon>
        <taxon>Rodentia</taxon>
        <taxon>Myomorpha</taxon>
        <taxon>Muroidea</taxon>
        <taxon>Muridae</taxon>
        <taxon>Murinae</taxon>
        <taxon>Mus</taxon>
        <taxon>Mus</taxon>
    </lineage>
</organism>
<dbReference type="EMBL" id="AK029101">
    <property type="protein sequence ID" value="BAC26297.1"/>
    <property type="molecule type" value="mRNA"/>
</dbReference>
<dbReference type="EMBL" id="AK169910">
    <property type="protein sequence ID" value="BAE41452.1"/>
    <property type="status" value="ALT_FRAME"/>
    <property type="molecule type" value="mRNA"/>
</dbReference>
<dbReference type="EMBL" id="BC011167">
    <property type="protein sequence ID" value="AAH11167.1"/>
    <property type="molecule type" value="mRNA"/>
</dbReference>
<dbReference type="CCDS" id="CCDS25424.1">
    <molecule id="Q8CE33-1"/>
</dbReference>
<dbReference type="RefSeq" id="NP_766153.1">
    <molecule id="Q8CE33-1"/>
    <property type="nucleotide sequence ID" value="NM_172565.2"/>
</dbReference>
<dbReference type="SMR" id="Q8CE33"/>
<dbReference type="BioGRID" id="229858">
    <property type="interactions" value="8"/>
</dbReference>
<dbReference type="FunCoup" id="Q8CE33">
    <property type="interactions" value="69"/>
</dbReference>
<dbReference type="STRING" id="10090.ENSMUSP00000054963"/>
<dbReference type="iPTMnet" id="Q8CE33"/>
<dbReference type="PhosphoSitePlus" id="Q8CE33"/>
<dbReference type="PaxDb" id="10090-ENSMUSP00000054963"/>
<dbReference type="ProteomicsDB" id="263651">
    <molecule id="Q8CE33-1"/>
</dbReference>
<dbReference type="ProteomicsDB" id="263652">
    <molecule id="Q8CE33-2"/>
</dbReference>
<dbReference type="Pumba" id="Q8CE33"/>
<dbReference type="Antibodypedia" id="16791">
    <property type="antibodies" value="108 antibodies from 23 providers"/>
</dbReference>
<dbReference type="DNASU" id="217194"/>
<dbReference type="Ensembl" id="ENSMUST00000056665.4">
    <molecule id="Q8CE33-1"/>
    <property type="protein sequence ID" value="ENSMUSP00000054963.4"/>
    <property type="gene ID" value="ENSMUSG00000048732.6"/>
</dbReference>
<dbReference type="GeneID" id="217194"/>
<dbReference type="KEGG" id="mmu:217194"/>
<dbReference type="UCSC" id="uc007llj.1">
    <molecule id="Q8CE33-1"/>
    <property type="organism name" value="mouse"/>
</dbReference>
<dbReference type="AGR" id="MGI:2388648"/>
<dbReference type="CTD" id="55175"/>
<dbReference type="MGI" id="MGI:2388648">
    <property type="gene designation" value="Klhl11"/>
</dbReference>
<dbReference type="VEuPathDB" id="HostDB:ENSMUSG00000048732"/>
<dbReference type="eggNOG" id="KOG1072">
    <property type="taxonomic scope" value="Eukaryota"/>
</dbReference>
<dbReference type="GeneTree" id="ENSGT00940000159275"/>
<dbReference type="HOGENOM" id="CLU_024322_0_0_1"/>
<dbReference type="InParanoid" id="Q8CE33"/>
<dbReference type="OMA" id="LWSSHMA"/>
<dbReference type="OrthoDB" id="9978265at2759"/>
<dbReference type="PhylomeDB" id="Q8CE33"/>
<dbReference type="TreeFam" id="TF331981"/>
<dbReference type="Reactome" id="R-MMU-8951664">
    <property type="pathway name" value="Neddylation"/>
</dbReference>
<dbReference type="Reactome" id="R-MMU-983168">
    <property type="pathway name" value="Antigen processing: Ubiquitination &amp; Proteasome degradation"/>
</dbReference>
<dbReference type="BioGRID-ORCS" id="217194">
    <property type="hits" value="1 hit in 78 CRISPR screens"/>
</dbReference>
<dbReference type="PRO" id="PR:Q8CE33"/>
<dbReference type="Proteomes" id="UP000000589">
    <property type="component" value="Chromosome 11"/>
</dbReference>
<dbReference type="RNAct" id="Q8CE33">
    <property type="molecule type" value="protein"/>
</dbReference>
<dbReference type="Bgee" id="ENSMUSG00000048732">
    <property type="expression patterns" value="Expressed in cleaving embryo and 143 other cell types or tissues"/>
</dbReference>
<dbReference type="ExpressionAtlas" id="Q8CE33">
    <property type="expression patterns" value="baseline and differential"/>
</dbReference>
<dbReference type="CDD" id="cd18451">
    <property type="entry name" value="BACK_KLHL11"/>
    <property type="match status" value="1"/>
</dbReference>
<dbReference type="CDD" id="cd18241">
    <property type="entry name" value="BTB_POZ_KLHL11"/>
    <property type="match status" value="1"/>
</dbReference>
<dbReference type="FunFam" id="1.25.40.420:FF:000019">
    <property type="entry name" value="Kelch-like 11 (Drosophila) (Predicted)"/>
    <property type="match status" value="1"/>
</dbReference>
<dbReference type="Gene3D" id="1.25.40.420">
    <property type="match status" value="1"/>
</dbReference>
<dbReference type="Gene3D" id="2.120.10.80">
    <property type="entry name" value="Kelch-type beta propeller"/>
    <property type="match status" value="2"/>
</dbReference>
<dbReference type="Gene3D" id="3.30.710.10">
    <property type="entry name" value="Potassium Channel Kv1.1, Chain A"/>
    <property type="match status" value="1"/>
</dbReference>
<dbReference type="InterPro" id="IPR011705">
    <property type="entry name" value="BACK"/>
</dbReference>
<dbReference type="InterPro" id="IPR000210">
    <property type="entry name" value="BTB/POZ_dom"/>
</dbReference>
<dbReference type="InterPro" id="IPR015915">
    <property type="entry name" value="Kelch-typ_b-propeller"/>
</dbReference>
<dbReference type="InterPro" id="IPR006652">
    <property type="entry name" value="Kelch_1"/>
</dbReference>
<dbReference type="InterPro" id="IPR011333">
    <property type="entry name" value="SKP1/BTB/POZ_sf"/>
</dbReference>
<dbReference type="PANTHER" id="PTHR45632:SF3">
    <property type="entry name" value="KELCH-LIKE PROTEIN 32"/>
    <property type="match status" value="1"/>
</dbReference>
<dbReference type="PANTHER" id="PTHR45632">
    <property type="entry name" value="LD33804P"/>
    <property type="match status" value="1"/>
</dbReference>
<dbReference type="Pfam" id="PF07707">
    <property type="entry name" value="BACK"/>
    <property type="match status" value="1"/>
</dbReference>
<dbReference type="Pfam" id="PF00651">
    <property type="entry name" value="BTB"/>
    <property type="match status" value="1"/>
</dbReference>
<dbReference type="Pfam" id="PF01344">
    <property type="entry name" value="Kelch_1"/>
    <property type="match status" value="2"/>
</dbReference>
<dbReference type="SMART" id="SM00875">
    <property type="entry name" value="BACK"/>
    <property type="match status" value="1"/>
</dbReference>
<dbReference type="SMART" id="SM00225">
    <property type="entry name" value="BTB"/>
    <property type="match status" value="1"/>
</dbReference>
<dbReference type="SMART" id="SM00612">
    <property type="entry name" value="Kelch"/>
    <property type="match status" value="4"/>
</dbReference>
<dbReference type="SUPFAM" id="SSF117281">
    <property type="entry name" value="Kelch motif"/>
    <property type="match status" value="2"/>
</dbReference>
<dbReference type="SUPFAM" id="SSF54695">
    <property type="entry name" value="POZ domain"/>
    <property type="match status" value="1"/>
</dbReference>
<dbReference type="PROSITE" id="PS50097">
    <property type="entry name" value="BTB"/>
    <property type="match status" value="1"/>
</dbReference>